<gene>
    <name evidence="1" type="primary">menD</name>
    <name type="ordered locus">cce_1865</name>
</gene>
<feature type="chain" id="PRO_1000187063" description="2-succinyl-5-enolpyruvyl-6-hydroxy-3-cyclohexene-1-carboxylate synthase">
    <location>
        <begin position="1"/>
        <end position="585"/>
    </location>
</feature>
<reference key="1">
    <citation type="journal article" date="2008" name="Proc. Natl. Acad. Sci. U.S.A.">
        <title>The genome of Cyanothece 51142, a unicellular diazotrophic cyanobacterium important in the marine nitrogen cycle.</title>
        <authorList>
            <person name="Welsh E.A."/>
            <person name="Liberton M."/>
            <person name="Stoeckel J."/>
            <person name="Loh T."/>
            <person name="Elvitigala T."/>
            <person name="Wang C."/>
            <person name="Wollam A."/>
            <person name="Fulton R.S."/>
            <person name="Clifton S.W."/>
            <person name="Jacobs J.M."/>
            <person name="Aurora R."/>
            <person name="Ghosh B.K."/>
            <person name="Sherman L.A."/>
            <person name="Smith R.D."/>
            <person name="Wilson R.K."/>
            <person name="Pakrasi H.B."/>
        </authorList>
    </citation>
    <scope>NUCLEOTIDE SEQUENCE [LARGE SCALE GENOMIC DNA]</scope>
    <source>
        <strain>ATCC 51142 / BH68</strain>
    </source>
</reference>
<accession>B1WZR3</accession>
<organism>
    <name type="scientific">Crocosphaera subtropica (strain ATCC 51142 / BH68)</name>
    <name type="common">Cyanothece sp. (strain ATCC 51142)</name>
    <dbReference type="NCBI Taxonomy" id="43989"/>
    <lineage>
        <taxon>Bacteria</taxon>
        <taxon>Bacillati</taxon>
        <taxon>Cyanobacteriota</taxon>
        <taxon>Cyanophyceae</taxon>
        <taxon>Oscillatoriophycideae</taxon>
        <taxon>Chroococcales</taxon>
        <taxon>Aphanothecaceae</taxon>
        <taxon>Crocosphaera</taxon>
        <taxon>Crocosphaera subtropica</taxon>
    </lineage>
</organism>
<dbReference type="EC" id="2.2.1.9" evidence="1"/>
<dbReference type="EMBL" id="CP000806">
    <property type="protein sequence ID" value="ACB51215.1"/>
    <property type="molecule type" value="Genomic_DNA"/>
</dbReference>
<dbReference type="RefSeq" id="WP_009545677.1">
    <property type="nucleotide sequence ID" value="NC_010546.1"/>
</dbReference>
<dbReference type="SMR" id="B1WZR3"/>
<dbReference type="STRING" id="43989.cce_1865"/>
<dbReference type="KEGG" id="cyt:cce_1865"/>
<dbReference type="eggNOG" id="COG1165">
    <property type="taxonomic scope" value="Bacteria"/>
</dbReference>
<dbReference type="HOGENOM" id="CLU_006051_3_0_3"/>
<dbReference type="OrthoDB" id="9791859at2"/>
<dbReference type="UniPathway" id="UPA00995"/>
<dbReference type="UniPathway" id="UPA01057">
    <property type="reaction ID" value="UER00164"/>
</dbReference>
<dbReference type="Proteomes" id="UP000001203">
    <property type="component" value="Chromosome circular"/>
</dbReference>
<dbReference type="GO" id="GO:0070204">
    <property type="term" value="F:2-succinyl-5-enolpyruvyl-6-hydroxy-3-cyclohexene-1-carboxylic-acid synthase activity"/>
    <property type="evidence" value="ECO:0007669"/>
    <property type="project" value="UniProtKB-UniRule"/>
</dbReference>
<dbReference type="GO" id="GO:0000287">
    <property type="term" value="F:magnesium ion binding"/>
    <property type="evidence" value="ECO:0007669"/>
    <property type="project" value="UniProtKB-UniRule"/>
</dbReference>
<dbReference type="GO" id="GO:0030145">
    <property type="term" value="F:manganese ion binding"/>
    <property type="evidence" value="ECO:0007669"/>
    <property type="project" value="UniProtKB-UniRule"/>
</dbReference>
<dbReference type="GO" id="GO:0030976">
    <property type="term" value="F:thiamine pyrophosphate binding"/>
    <property type="evidence" value="ECO:0007669"/>
    <property type="project" value="UniProtKB-UniRule"/>
</dbReference>
<dbReference type="GO" id="GO:0009234">
    <property type="term" value="P:menaquinone biosynthetic process"/>
    <property type="evidence" value="ECO:0007669"/>
    <property type="project" value="InterPro"/>
</dbReference>
<dbReference type="GO" id="GO:0042372">
    <property type="term" value="P:phylloquinone biosynthetic process"/>
    <property type="evidence" value="ECO:0007669"/>
    <property type="project" value="UniProtKB-UniRule"/>
</dbReference>
<dbReference type="CDD" id="cd07037">
    <property type="entry name" value="TPP_PYR_MenD"/>
    <property type="match status" value="1"/>
</dbReference>
<dbReference type="CDD" id="cd02009">
    <property type="entry name" value="TPP_SHCHC_synthase"/>
    <property type="match status" value="1"/>
</dbReference>
<dbReference type="Gene3D" id="3.40.50.970">
    <property type="match status" value="2"/>
</dbReference>
<dbReference type="Gene3D" id="3.40.50.1220">
    <property type="entry name" value="TPP-binding domain"/>
    <property type="match status" value="1"/>
</dbReference>
<dbReference type="HAMAP" id="MF_01659">
    <property type="entry name" value="MenD"/>
    <property type="match status" value="1"/>
</dbReference>
<dbReference type="InterPro" id="IPR004433">
    <property type="entry name" value="MenaQ_synth_MenD"/>
</dbReference>
<dbReference type="InterPro" id="IPR032264">
    <property type="entry name" value="MenD_middle"/>
</dbReference>
<dbReference type="InterPro" id="IPR029061">
    <property type="entry name" value="THDP-binding"/>
</dbReference>
<dbReference type="InterPro" id="IPR012001">
    <property type="entry name" value="Thiamin_PyroP_enz_TPP-bd_dom"/>
</dbReference>
<dbReference type="InterPro" id="IPR011766">
    <property type="entry name" value="TPP_enzyme_TPP-bd"/>
</dbReference>
<dbReference type="NCBIfam" id="TIGR00173">
    <property type="entry name" value="menD"/>
    <property type="match status" value="1"/>
</dbReference>
<dbReference type="PANTHER" id="PTHR42916">
    <property type="entry name" value="2-SUCCINYL-5-ENOLPYRUVYL-6-HYDROXY-3-CYCLOHEXENE-1-CARBOXYLATE SYNTHASE"/>
    <property type="match status" value="1"/>
</dbReference>
<dbReference type="PANTHER" id="PTHR42916:SF1">
    <property type="entry name" value="PROTEIN PHYLLO, CHLOROPLASTIC"/>
    <property type="match status" value="1"/>
</dbReference>
<dbReference type="Pfam" id="PF02775">
    <property type="entry name" value="TPP_enzyme_C"/>
    <property type="match status" value="1"/>
</dbReference>
<dbReference type="Pfam" id="PF16582">
    <property type="entry name" value="TPP_enzyme_M_2"/>
    <property type="match status" value="1"/>
</dbReference>
<dbReference type="Pfam" id="PF02776">
    <property type="entry name" value="TPP_enzyme_N"/>
    <property type="match status" value="1"/>
</dbReference>
<dbReference type="PIRSF" id="PIRSF004983">
    <property type="entry name" value="MenD"/>
    <property type="match status" value="1"/>
</dbReference>
<dbReference type="SUPFAM" id="SSF52518">
    <property type="entry name" value="Thiamin diphosphate-binding fold (THDP-binding)"/>
    <property type="match status" value="2"/>
</dbReference>
<protein>
    <recommendedName>
        <fullName evidence="1">2-succinyl-5-enolpyruvyl-6-hydroxy-3-cyclohexene-1-carboxylate synthase</fullName>
        <shortName evidence="1">SEPHCHC synthase</shortName>
        <ecNumber evidence="1">2.2.1.9</ecNumber>
    </recommendedName>
</protein>
<proteinExistence type="inferred from homology"/>
<keyword id="KW-0460">Magnesium</keyword>
<keyword id="KW-0464">Manganese</keyword>
<keyword id="KW-0479">Metal-binding</keyword>
<keyword id="KW-1185">Reference proteome</keyword>
<keyword id="KW-0786">Thiamine pyrophosphate</keyword>
<keyword id="KW-0808">Transferase</keyword>
<sequence>MQLDFRNINTLWSSIIVETLSRLGLTTAVICPGSRSTPLTVAFASHSKIDTIPILDERSAAFFALGIAKRTHLPVALICTSGTAGANFYPAVIEGKESQVPLLIFTADRPPELRNCHAGQTIDQVKLYGNYCNWYIELSLPSVEIRLLSYLRQTIIAAWDHALVPYKGIVHLNCPFREPLAPIIEPNIASLCTEVNFDNFFLNIYESNKKRLRTDYLYDHLNHWLSQANGIIIAGVGNSNNTDLYCNQIFRLSTLLNYPVLAEALCPFRNHAQGFPNLINTYDILLRNQKLADELVPDVVIQIGEFPTSKQLREWLTHHQVQHWVIDSRPDSLDPLHNNTYYIRTDIHDLEMEYNKQCIPGKQDLSYLQQWKKINKIINRNIKTTLDKTNELIEAKLPFILSKNLQDKTSIFIANSMPVRYAEFFWMPNKGQFMPYFNRGANGIEGTLSTALGVAYKAKSSLLITGDLALLHDTNGWLIRQHFQGHLTIILINNNGGGIFEMLPIAKEESVFESYFATPQNINFSQLCSTYNVEHILIKNWTQLKRLLNPLPSTGIRVLELQTDRKKDALWLQDNMKKLSMIDNK</sequence>
<name>MEND_CROS5</name>
<evidence type="ECO:0000255" key="1">
    <source>
        <dbReference type="HAMAP-Rule" id="MF_01659"/>
    </source>
</evidence>
<comment type="function">
    <text evidence="1">Catalyzes the thiamine diphosphate-dependent decarboxylation of 2-oxoglutarate and the subsequent addition of the resulting succinic semialdehyde-thiamine pyrophosphate anion to isochorismate to yield 2-succinyl-5-enolpyruvyl-6-hydroxy-3-cyclohexene-1-carboxylate (SEPHCHC).</text>
</comment>
<comment type="catalytic activity">
    <reaction evidence="1">
        <text>isochorismate + 2-oxoglutarate + H(+) = 5-enolpyruvoyl-6-hydroxy-2-succinyl-cyclohex-3-ene-1-carboxylate + CO2</text>
        <dbReference type="Rhea" id="RHEA:25593"/>
        <dbReference type="ChEBI" id="CHEBI:15378"/>
        <dbReference type="ChEBI" id="CHEBI:16526"/>
        <dbReference type="ChEBI" id="CHEBI:16810"/>
        <dbReference type="ChEBI" id="CHEBI:29780"/>
        <dbReference type="ChEBI" id="CHEBI:58818"/>
        <dbReference type="EC" id="2.2.1.9"/>
    </reaction>
</comment>
<comment type="cofactor">
    <cofactor evidence="1">
        <name>Mg(2+)</name>
        <dbReference type="ChEBI" id="CHEBI:18420"/>
    </cofactor>
    <cofactor evidence="1">
        <name>Mn(2+)</name>
        <dbReference type="ChEBI" id="CHEBI:29035"/>
    </cofactor>
</comment>
<comment type="cofactor">
    <cofactor evidence="1">
        <name>thiamine diphosphate</name>
        <dbReference type="ChEBI" id="CHEBI:58937"/>
    </cofactor>
    <text evidence="1">Binds 1 thiamine pyrophosphate per subunit.</text>
</comment>
<comment type="pathway">
    <text evidence="1">Quinol/quinone metabolism; 1,4-dihydroxy-2-naphthoate biosynthesis; 1,4-dihydroxy-2-naphthoate from chorismate: step 2/7.</text>
</comment>
<comment type="pathway">
    <text evidence="1">Cofactor biosynthesis; phylloquinone biosynthesis.</text>
</comment>
<comment type="subunit">
    <text evidence="1">Homodimer.</text>
</comment>
<comment type="similarity">
    <text evidence="1">Belongs to the TPP enzyme family. MenD subfamily.</text>
</comment>